<keyword id="KW-0175">Coiled coil</keyword>
<keyword id="KW-0614">Plasmid</keyword>
<keyword id="KW-1185">Reference proteome</keyword>
<geneLocation type="plasmid">
    <name>pDP1</name>
</geneLocation>
<gene>
    <name type="primary">orf2</name>
    <name type="ordered locus">SPD_2302</name>
</gene>
<evidence type="ECO:0000255" key="1"/>
<organism>
    <name type="scientific">Streptococcus pneumoniae serotype 2 (strain D39 / NCTC 7466)</name>
    <dbReference type="NCBI Taxonomy" id="373153"/>
    <lineage>
        <taxon>Bacteria</taxon>
        <taxon>Bacillati</taxon>
        <taxon>Bacillota</taxon>
        <taxon>Bacilli</taxon>
        <taxon>Lactobacillales</taxon>
        <taxon>Streptococcaceae</taxon>
        <taxon>Streptococcus</taxon>
    </lineage>
</organism>
<dbReference type="EMBL" id="AF047696">
    <property type="protein sequence ID" value="AAD12156.1"/>
    <property type="molecule type" value="Genomic_DNA"/>
</dbReference>
<dbReference type="RefSeq" id="NP_863587.1">
    <property type="nucleotide sequence ID" value="NC_005022.1"/>
</dbReference>
<dbReference type="RefSeq" id="WP_004215606.1">
    <property type="nucleotide sequence ID" value="NC_005022.1"/>
</dbReference>
<dbReference type="SMR" id="O54552"/>
<dbReference type="PRO" id="PR:O54552"/>
<dbReference type="Proteomes" id="UP000001452">
    <property type="component" value="Plasmid pDP1"/>
</dbReference>
<proteinExistence type="predicted"/>
<feature type="chain" id="PRO_0000275931" description="Uncharacterized protein SPD_2302">
    <location>
        <begin position="1"/>
        <end position="109"/>
    </location>
</feature>
<feature type="coiled-coil region" evidence="1">
    <location>
        <begin position="27"/>
        <end position="89"/>
    </location>
</feature>
<sequence length="109" mass="12930">MSISFRTNTSMMNIAYKNRDLSDEEFKEEAHQFRDKEIKILEEKLKELNISCKVVGINSIKDMNEYKEIMENVNQAKEELKRIDELIAVRSSRIDFLEDKTLRITGNQR</sequence>
<protein>
    <recommendedName>
        <fullName>Uncharacterized protein SPD_2302</fullName>
    </recommendedName>
</protein>
<accession>O54552</accession>
<name>Y2302_STRP2</name>
<reference key="1">
    <citation type="journal article" date="1999" name="Plasmid">
        <title>Characterization of cryptic plasmids pDP1 and pSMB1 of Streptococcus pneumoniae.</title>
        <authorList>
            <person name="Oggioni M.R."/>
            <person name="Iannelli F."/>
            <person name="Pozzi G."/>
        </authorList>
    </citation>
    <scope>NUCLEOTIDE SEQUENCE [LARGE SCALE GENOMIC DNA]</scope>
    <source>
        <strain>D39 / NCTC 7466</strain>
    </source>
</reference>